<reference key="1">
    <citation type="journal article" date="2004" name="Proc. Natl. Acad. Sci. U.S.A.">
        <title>Complete genomes of two clinical Staphylococcus aureus strains: evidence for the rapid evolution of virulence and drug resistance.</title>
        <authorList>
            <person name="Holden M.T.G."/>
            <person name="Feil E.J."/>
            <person name="Lindsay J.A."/>
            <person name="Peacock S.J."/>
            <person name="Day N.P.J."/>
            <person name="Enright M.C."/>
            <person name="Foster T.J."/>
            <person name="Moore C.E."/>
            <person name="Hurst L."/>
            <person name="Atkin R."/>
            <person name="Barron A."/>
            <person name="Bason N."/>
            <person name="Bentley S.D."/>
            <person name="Chillingworth C."/>
            <person name="Chillingworth T."/>
            <person name="Churcher C."/>
            <person name="Clark L."/>
            <person name="Corton C."/>
            <person name="Cronin A."/>
            <person name="Doggett J."/>
            <person name="Dowd L."/>
            <person name="Feltwell T."/>
            <person name="Hance Z."/>
            <person name="Harris B."/>
            <person name="Hauser H."/>
            <person name="Holroyd S."/>
            <person name="Jagels K."/>
            <person name="James K.D."/>
            <person name="Lennard N."/>
            <person name="Line A."/>
            <person name="Mayes R."/>
            <person name="Moule S."/>
            <person name="Mungall K."/>
            <person name="Ormond D."/>
            <person name="Quail M.A."/>
            <person name="Rabbinowitsch E."/>
            <person name="Rutherford K.M."/>
            <person name="Sanders M."/>
            <person name="Sharp S."/>
            <person name="Simmonds M."/>
            <person name="Stevens K."/>
            <person name="Whitehead S."/>
            <person name="Barrell B.G."/>
            <person name="Spratt B.G."/>
            <person name="Parkhill J."/>
        </authorList>
    </citation>
    <scope>NUCLEOTIDE SEQUENCE [LARGE SCALE GENOMIC DNA]</scope>
    <source>
        <strain>MSSA476</strain>
    </source>
</reference>
<gene>
    <name evidence="2" type="primary">ddl</name>
    <name type="ordered locus">SAS1987</name>
</gene>
<proteinExistence type="inferred from homology"/>
<protein>
    <recommendedName>
        <fullName evidence="2">D-alanine--D-alanine ligase</fullName>
        <ecNumber evidence="2">6.3.2.4</ecNumber>
    </recommendedName>
    <alternativeName>
        <fullName evidence="2">D-Ala-D-Ala ligase</fullName>
    </alternativeName>
    <alternativeName>
        <fullName evidence="2">D-alanylalanine synthetase</fullName>
    </alternativeName>
</protein>
<comment type="function">
    <text evidence="2">Cell wall formation.</text>
</comment>
<comment type="catalytic activity">
    <reaction evidence="2">
        <text>2 D-alanine + ATP = D-alanyl-D-alanine + ADP + phosphate + H(+)</text>
        <dbReference type="Rhea" id="RHEA:11224"/>
        <dbReference type="ChEBI" id="CHEBI:15378"/>
        <dbReference type="ChEBI" id="CHEBI:30616"/>
        <dbReference type="ChEBI" id="CHEBI:43474"/>
        <dbReference type="ChEBI" id="CHEBI:57416"/>
        <dbReference type="ChEBI" id="CHEBI:57822"/>
        <dbReference type="ChEBI" id="CHEBI:456216"/>
        <dbReference type="EC" id="6.3.2.4"/>
    </reaction>
</comment>
<comment type="cofactor">
    <cofactor evidence="1">
        <name>Mg(2+)</name>
        <dbReference type="ChEBI" id="CHEBI:18420"/>
    </cofactor>
    <cofactor evidence="1">
        <name>Mn(2+)</name>
        <dbReference type="ChEBI" id="CHEBI:29035"/>
    </cofactor>
    <text evidence="1">Binds 2 magnesium or manganese ions per subunit.</text>
</comment>
<comment type="pathway">
    <text evidence="2">Cell wall biogenesis; peptidoglycan biosynthesis.</text>
</comment>
<comment type="subcellular location">
    <subcellularLocation>
        <location evidence="2">Cytoplasm</location>
    </subcellularLocation>
</comment>
<comment type="similarity">
    <text evidence="2">Belongs to the D-alanine--D-alanine ligase family.</text>
</comment>
<feature type="chain" id="PRO_0000177878" description="D-alanine--D-alanine ligase">
    <location>
        <begin position="1"/>
        <end position="356"/>
    </location>
</feature>
<feature type="domain" description="ATP-grasp" evidence="2">
    <location>
        <begin position="134"/>
        <end position="339"/>
    </location>
</feature>
<feature type="binding site" evidence="2">
    <location>
        <begin position="167"/>
        <end position="222"/>
    </location>
    <ligand>
        <name>ATP</name>
        <dbReference type="ChEBI" id="CHEBI:30616"/>
    </ligand>
</feature>
<feature type="binding site" evidence="2">
    <location>
        <position position="293"/>
    </location>
    <ligand>
        <name>Mg(2+)</name>
        <dbReference type="ChEBI" id="CHEBI:18420"/>
        <label>1</label>
    </ligand>
</feature>
<feature type="binding site" evidence="2">
    <location>
        <position position="306"/>
    </location>
    <ligand>
        <name>Mg(2+)</name>
        <dbReference type="ChEBI" id="CHEBI:18420"/>
        <label>1</label>
    </ligand>
</feature>
<feature type="binding site" evidence="2">
    <location>
        <position position="306"/>
    </location>
    <ligand>
        <name>Mg(2+)</name>
        <dbReference type="ChEBI" id="CHEBI:18420"/>
        <label>2</label>
    </ligand>
</feature>
<feature type="binding site" evidence="2">
    <location>
        <position position="308"/>
    </location>
    <ligand>
        <name>Mg(2+)</name>
        <dbReference type="ChEBI" id="CHEBI:18420"/>
        <label>2</label>
    </ligand>
</feature>
<accession>Q6G7M7</accession>
<sequence>MTKENICIVFGGKSAEHEVSILTAQNVLNAIDKDKYHVDIIYITNDGDWRKQNNITAEIISTDELHLENGEALEISQLLKESSSGQPYDAVFPLLHGPNGEDGTIQGLFEVLDVPYVGNGVLSAASSMDKLVMKQLFEHRGLPQLPYISFLRSEYEKYEHNILKLVNDKLNYPVFVKPANLGSSVGISKCNNEAELKEGIKEAFQFDRKLVIEQGVNAREIEVAVLGNDYPEATWPGEVVKDVAFYDYKSKYKDGKVQLQIPADLDEDVQLTLRNMALEAFKATDCSGLVRADFFVTEDNQIYINETNAMPGFTAFSMYPKLWENMGLSYPELITKLIELAKERHQDKQKNKYKID</sequence>
<dbReference type="EC" id="6.3.2.4" evidence="2"/>
<dbReference type="EMBL" id="BX571857">
    <property type="protein sequence ID" value="CAG43794.1"/>
    <property type="molecule type" value="Genomic_DNA"/>
</dbReference>
<dbReference type="RefSeq" id="WP_000159627.1">
    <property type="nucleotide sequence ID" value="NC_002953.3"/>
</dbReference>
<dbReference type="SMR" id="Q6G7M7"/>
<dbReference type="KEGG" id="sas:SAS1987"/>
<dbReference type="HOGENOM" id="CLU_039268_0_0_9"/>
<dbReference type="UniPathway" id="UPA00219"/>
<dbReference type="GO" id="GO:0005829">
    <property type="term" value="C:cytosol"/>
    <property type="evidence" value="ECO:0007669"/>
    <property type="project" value="TreeGrafter"/>
</dbReference>
<dbReference type="GO" id="GO:0005524">
    <property type="term" value="F:ATP binding"/>
    <property type="evidence" value="ECO:0007669"/>
    <property type="project" value="UniProtKB-KW"/>
</dbReference>
<dbReference type="GO" id="GO:0008716">
    <property type="term" value="F:D-alanine-D-alanine ligase activity"/>
    <property type="evidence" value="ECO:0007669"/>
    <property type="project" value="UniProtKB-UniRule"/>
</dbReference>
<dbReference type="GO" id="GO:0046872">
    <property type="term" value="F:metal ion binding"/>
    <property type="evidence" value="ECO:0007669"/>
    <property type="project" value="UniProtKB-KW"/>
</dbReference>
<dbReference type="GO" id="GO:0071555">
    <property type="term" value="P:cell wall organization"/>
    <property type="evidence" value="ECO:0007669"/>
    <property type="project" value="UniProtKB-KW"/>
</dbReference>
<dbReference type="GO" id="GO:0009252">
    <property type="term" value="P:peptidoglycan biosynthetic process"/>
    <property type="evidence" value="ECO:0007669"/>
    <property type="project" value="UniProtKB-UniRule"/>
</dbReference>
<dbReference type="GO" id="GO:0008360">
    <property type="term" value="P:regulation of cell shape"/>
    <property type="evidence" value="ECO:0007669"/>
    <property type="project" value="UniProtKB-KW"/>
</dbReference>
<dbReference type="FunFam" id="3.30.1490.20:FF:000007">
    <property type="entry name" value="D-alanine--D-alanine ligase"/>
    <property type="match status" value="1"/>
</dbReference>
<dbReference type="FunFam" id="3.30.470.20:FF:000008">
    <property type="entry name" value="D-alanine--D-alanine ligase"/>
    <property type="match status" value="1"/>
</dbReference>
<dbReference type="FunFam" id="3.40.50.20:FF:000020">
    <property type="entry name" value="D-alanine--D-alanine ligase"/>
    <property type="match status" value="1"/>
</dbReference>
<dbReference type="Gene3D" id="3.40.50.20">
    <property type="match status" value="1"/>
</dbReference>
<dbReference type="Gene3D" id="3.30.1490.20">
    <property type="entry name" value="ATP-grasp fold, A domain"/>
    <property type="match status" value="1"/>
</dbReference>
<dbReference type="Gene3D" id="3.30.470.20">
    <property type="entry name" value="ATP-grasp fold, B domain"/>
    <property type="match status" value="1"/>
</dbReference>
<dbReference type="HAMAP" id="MF_00047">
    <property type="entry name" value="Dala_Dala_lig"/>
    <property type="match status" value="1"/>
</dbReference>
<dbReference type="InterPro" id="IPR011761">
    <property type="entry name" value="ATP-grasp"/>
</dbReference>
<dbReference type="InterPro" id="IPR013815">
    <property type="entry name" value="ATP_grasp_subdomain_1"/>
</dbReference>
<dbReference type="InterPro" id="IPR000291">
    <property type="entry name" value="D-Ala_lig_Van_CS"/>
</dbReference>
<dbReference type="InterPro" id="IPR005905">
    <property type="entry name" value="D_ala_D_ala"/>
</dbReference>
<dbReference type="InterPro" id="IPR011095">
    <property type="entry name" value="Dala_Dala_lig_C"/>
</dbReference>
<dbReference type="InterPro" id="IPR011127">
    <property type="entry name" value="Dala_Dala_lig_N"/>
</dbReference>
<dbReference type="InterPro" id="IPR016185">
    <property type="entry name" value="PreATP-grasp_dom_sf"/>
</dbReference>
<dbReference type="NCBIfam" id="TIGR01205">
    <property type="entry name" value="D_ala_D_alaTIGR"/>
    <property type="match status" value="1"/>
</dbReference>
<dbReference type="NCBIfam" id="NF002526">
    <property type="entry name" value="PRK01966.1-2"/>
    <property type="match status" value="1"/>
</dbReference>
<dbReference type="NCBIfam" id="NF002528">
    <property type="entry name" value="PRK01966.1-4"/>
    <property type="match status" value="1"/>
</dbReference>
<dbReference type="PANTHER" id="PTHR23132">
    <property type="entry name" value="D-ALANINE--D-ALANINE LIGASE"/>
    <property type="match status" value="1"/>
</dbReference>
<dbReference type="PANTHER" id="PTHR23132:SF25">
    <property type="entry name" value="D-ALANINE--D-ALANINE LIGASE A"/>
    <property type="match status" value="1"/>
</dbReference>
<dbReference type="Pfam" id="PF07478">
    <property type="entry name" value="Dala_Dala_lig_C"/>
    <property type="match status" value="1"/>
</dbReference>
<dbReference type="Pfam" id="PF01820">
    <property type="entry name" value="Dala_Dala_lig_N"/>
    <property type="match status" value="1"/>
</dbReference>
<dbReference type="PIRSF" id="PIRSF039102">
    <property type="entry name" value="Ddl/VanB"/>
    <property type="match status" value="1"/>
</dbReference>
<dbReference type="SUPFAM" id="SSF56059">
    <property type="entry name" value="Glutathione synthetase ATP-binding domain-like"/>
    <property type="match status" value="1"/>
</dbReference>
<dbReference type="SUPFAM" id="SSF52440">
    <property type="entry name" value="PreATP-grasp domain"/>
    <property type="match status" value="1"/>
</dbReference>
<dbReference type="PROSITE" id="PS50975">
    <property type="entry name" value="ATP_GRASP"/>
    <property type="match status" value="1"/>
</dbReference>
<dbReference type="PROSITE" id="PS00843">
    <property type="entry name" value="DALA_DALA_LIGASE_1"/>
    <property type="match status" value="1"/>
</dbReference>
<dbReference type="PROSITE" id="PS00844">
    <property type="entry name" value="DALA_DALA_LIGASE_2"/>
    <property type="match status" value="1"/>
</dbReference>
<name>DDL_STAAS</name>
<keyword id="KW-0067">ATP-binding</keyword>
<keyword id="KW-0133">Cell shape</keyword>
<keyword id="KW-0961">Cell wall biogenesis/degradation</keyword>
<keyword id="KW-0963">Cytoplasm</keyword>
<keyword id="KW-0436">Ligase</keyword>
<keyword id="KW-0460">Magnesium</keyword>
<keyword id="KW-0464">Manganese</keyword>
<keyword id="KW-0479">Metal-binding</keyword>
<keyword id="KW-0547">Nucleotide-binding</keyword>
<keyword id="KW-0573">Peptidoglycan synthesis</keyword>
<organism>
    <name type="scientific">Staphylococcus aureus (strain MSSA476)</name>
    <dbReference type="NCBI Taxonomy" id="282459"/>
    <lineage>
        <taxon>Bacteria</taxon>
        <taxon>Bacillati</taxon>
        <taxon>Bacillota</taxon>
        <taxon>Bacilli</taxon>
        <taxon>Bacillales</taxon>
        <taxon>Staphylococcaceae</taxon>
        <taxon>Staphylococcus</taxon>
    </lineage>
</organism>
<evidence type="ECO:0000250" key="1"/>
<evidence type="ECO:0000255" key="2">
    <source>
        <dbReference type="HAMAP-Rule" id="MF_00047"/>
    </source>
</evidence>